<keyword id="KW-0997">Cell inner membrane</keyword>
<keyword id="KW-1003">Cell membrane</keyword>
<keyword id="KW-0963">Cytoplasm</keyword>
<keyword id="KW-0472">Membrane</keyword>
<keyword id="KW-1185">Reference proteome</keyword>
<proteinExistence type="inferred from homology"/>
<name>HFLD_NITOC</name>
<reference key="1">
    <citation type="journal article" date="2006" name="Appl. Environ. Microbiol.">
        <title>Complete genome sequence of the marine, chemolithoautotrophic, ammonia-oxidizing bacterium Nitrosococcus oceani ATCC 19707.</title>
        <authorList>
            <person name="Klotz M.G."/>
            <person name="Arp D.J."/>
            <person name="Chain P.S.G."/>
            <person name="El-Sheikh A.F."/>
            <person name="Hauser L.J."/>
            <person name="Hommes N.G."/>
            <person name="Larimer F.W."/>
            <person name="Malfatti S.A."/>
            <person name="Norton J.M."/>
            <person name="Poret-Peterson A.T."/>
            <person name="Vergez L.M."/>
            <person name="Ward B.B."/>
        </authorList>
    </citation>
    <scope>NUCLEOTIDE SEQUENCE [LARGE SCALE GENOMIC DNA]</scope>
    <source>
        <strain>ATCC 19707 / BCRC 17464 / JCM 30415 / NCIMB 11848 / C-107</strain>
    </source>
</reference>
<sequence>MSNVWHNRTLALAGIIQALNSVQQIARQGNAPIDTVAASLASVFKMNPKSAEDVYGNIEGVSVGLQVLNQQLNRKSYRTDPELLRYLTNIMYLEQRLKKRPRILAQIADQIKHIEPQTEELSPADPLIIARLADTYVNTISTLTPRIQIRGEETHLRQPENIERVRALLLAAIRSAVLWRQMGGTRLHLLFQGRQLLYETHTLLKRIPRAGAA</sequence>
<accession>Q3J9J5</accession>
<gene>
    <name evidence="1" type="primary">hflD</name>
    <name type="ordered locus">Noc_2041</name>
</gene>
<feature type="chain" id="PRO_1000045426" description="High frequency lysogenization protein HflD homolog">
    <location>
        <begin position="1"/>
        <end position="213"/>
    </location>
</feature>
<protein>
    <recommendedName>
        <fullName evidence="1">High frequency lysogenization protein HflD homolog</fullName>
    </recommendedName>
</protein>
<dbReference type="EMBL" id="CP000127">
    <property type="protein sequence ID" value="ABA58501.1"/>
    <property type="molecule type" value="Genomic_DNA"/>
</dbReference>
<dbReference type="RefSeq" id="WP_002811685.1">
    <property type="nucleotide sequence ID" value="NC_007484.1"/>
</dbReference>
<dbReference type="SMR" id="Q3J9J5"/>
<dbReference type="FunCoup" id="Q3J9J5">
    <property type="interactions" value="66"/>
</dbReference>
<dbReference type="STRING" id="323261.Noc_2041"/>
<dbReference type="KEGG" id="noc:Noc_2041"/>
<dbReference type="eggNOG" id="COG2915">
    <property type="taxonomic scope" value="Bacteria"/>
</dbReference>
<dbReference type="HOGENOM" id="CLU_098920_0_0_6"/>
<dbReference type="InParanoid" id="Q3J9J5"/>
<dbReference type="Proteomes" id="UP000006838">
    <property type="component" value="Chromosome"/>
</dbReference>
<dbReference type="GO" id="GO:0005737">
    <property type="term" value="C:cytoplasm"/>
    <property type="evidence" value="ECO:0007669"/>
    <property type="project" value="UniProtKB-SubCell"/>
</dbReference>
<dbReference type="GO" id="GO:0005886">
    <property type="term" value="C:plasma membrane"/>
    <property type="evidence" value="ECO:0007669"/>
    <property type="project" value="UniProtKB-SubCell"/>
</dbReference>
<dbReference type="Gene3D" id="1.10.3890.10">
    <property type="entry name" value="HflD-like"/>
    <property type="match status" value="1"/>
</dbReference>
<dbReference type="HAMAP" id="MF_00695">
    <property type="entry name" value="HflD_protein"/>
    <property type="match status" value="1"/>
</dbReference>
<dbReference type="InterPro" id="IPR007451">
    <property type="entry name" value="HflD"/>
</dbReference>
<dbReference type="InterPro" id="IPR035932">
    <property type="entry name" value="HflD-like_sf"/>
</dbReference>
<dbReference type="NCBIfam" id="NF001246">
    <property type="entry name" value="PRK00218.1-2"/>
    <property type="match status" value="1"/>
</dbReference>
<dbReference type="PANTHER" id="PTHR38100">
    <property type="entry name" value="HIGH FREQUENCY LYSOGENIZATION PROTEIN HFLD"/>
    <property type="match status" value="1"/>
</dbReference>
<dbReference type="PANTHER" id="PTHR38100:SF1">
    <property type="entry name" value="HIGH FREQUENCY LYSOGENIZATION PROTEIN HFLD"/>
    <property type="match status" value="1"/>
</dbReference>
<dbReference type="Pfam" id="PF04356">
    <property type="entry name" value="DUF489"/>
    <property type="match status" value="1"/>
</dbReference>
<dbReference type="SUPFAM" id="SSF101322">
    <property type="entry name" value="YcfC-like"/>
    <property type="match status" value="1"/>
</dbReference>
<organism>
    <name type="scientific">Nitrosococcus oceani (strain ATCC 19707 / BCRC 17464 / JCM 30415 / NCIMB 11848 / C-107)</name>
    <dbReference type="NCBI Taxonomy" id="323261"/>
    <lineage>
        <taxon>Bacteria</taxon>
        <taxon>Pseudomonadati</taxon>
        <taxon>Pseudomonadota</taxon>
        <taxon>Gammaproteobacteria</taxon>
        <taxon>Chromatiales</taxon>
        <taxon>Chromatiaceae</taxon>
        <taxon>Nitrosococcus</taxon>
    </lineage>
</organism>
<evidence type="ECO:0000255" key="1">
    <source>
        <dbReference type="HAMAP-Rule" id="MF_00695"/>
    </source>
</evidence>
<comment type="subcellular location">
    <subcellularLocation>
        <location>Cytoplasm</location>
    </subcellularLocation>
    <subcellularLocation>
        <location evidence="1">Cell inner membrane</location>
        <topology evidence="1">Peripheral membrane protein</topology>
        <orientation evidence="1">Cytoplasmic side</orientation>
    </subcellularLocation>
</comment>
<comment type="similarity">
    <text evidence="1">Belongs to the HflD family.</text>
</comment>